<protein>
    <recommendedName>
        <fullName evidence="1">Small ribosomal subunit protein uS8</fullName>
    </recommendedName>
    <alternativeName>
        <fullName evidence="2">30S ribosomal protein S8</fullName>
    </alternativeName>
</protein>
<reference key="1">
    <citation type="journal article" date="2005" name="J. Bacteriol.">
        <title>Whole-genome sequencing of Staphylococcus haemolyticus uncovers the extreme plasticity of its genome and the evolution of human-colonizing staphylococcal species.</title>
        <authorList>
            <person name="Takeuchi F."/>
            <person name="Watanabe S."/>
            <person name="Baba T."/>
            <person name="Yuzawa H."/>
            <person name="Ito T."/>
            <person name="Morimoto Y."/>
            <person name="Kuroda M."/>
            <person name="Cui L."/>
            <person name="Takahashi M."/>
            <person name="Ankai A."/>
            <person name="Baba S."/>
            <person name="Fukui S."/>
            <person name="Lee J.C."/>
            <person name="Hiramatsu K."/>
        </authorList>
    </citation>
    <scope>NUCLEOTIDE SEQUENCE [LARGE SCALE GENOMIC DNA]</scope>
    <source>
        <strain>JCSC1435</strain>
    </source>
</reference>
<name>RS8_STAHJ</name>
<evidence type="ECO:0000255" key="1">
    <source>
        <dbReference type="HAMAP-Rule" id="MF_01302"/>
    </source>
</evidence>
<evidence type="ECO:0000305" key="2"/>
<organism>
    <name type="scientific">Staphylococcus haemolyticus (strain JCSC1435)</name>
    <dbReference type="NCBI Taxonomy" id="279808"/>
    <lineage>
        <taxon>Bacteria</taxon>
        <taxon>Bacillati</taxon>
        <taxon>Bacillota</taxon>
        <taxon>Bacilli</taxon>
        <taxon>Bacillales</taxon>
        <taxon>Staphylococcaceae</taxon>
        <taxon>Staphylococcus</taxon>
    </lineage>
</organism>
<comment type="function">
    <text evidence="1">One of the primary rRNA binding proteins, it binds directly to 16S rRNA central domain where it helps coordinate assembly of the platform of the 30S subunit.</text>
</comment>
<comment type="subunit">
    <text evidence="1">Part of the 30S ribosomal subunit. Contacts proteins S5 and S12.</text>
</comment>
<comment type="similarity">
    <text evidence="1">Belongs to the universal ribosomal protein uS8 family.</text>
</comment>
<feature type="chain" id="PRO_0000225894" description="Small ribosomal subunit protein uS8">
    <location>
        <begin position="1"/>
        <end position="132"/>
    </location>
</feature>
<dbReference type="EMBL" id="AP006716">
    <property type="protein sequence ID" value="BAE04125.1"/>
    <property type="molecule type" value="Genomic_DNA"/>
</dbReference>
<dbReference type="RefSeq" id="WP_011275134.1">
    <property type="nucleotide sequence ID" value="NC_007168.1"/>
</dbReference>
<dbReference type="SMR" id="Q4L8A0"/>
<dbReference type="GeneID" id="93780205"/>
<dbReference type="KEGG" id="sha:SH0816"/>
<dbReference type="eggNOG" id="COG0096">
    <property type="taxonomic scope" value="Bacteria"/>
</dbReference>
<dbReference type="HOGENOM" id="CLU_098428_0_2_9"/>
<dbReference type="OrthoDB" id="9802617at2"/>
<dbReference type="Proteomes" id="UP000000543">
    <property type="component" value="Chromosome"/>
</dbReference>
<dbReference type="GO" id="GO:1990904">
    <property type="term" value="C:ribonucleoprotein complex"/>
    <property type="evidence" value="ECO:0007669"/>
    <property type="project" value="UniProtKB-KW"/>
</dbReference>
<dbReference type="GO" id="GO:0005840">
    <property type="term" value="C:ribosome"/>
    <property type="evidence" value="ECO:0007669"/>
    <property type="project" value="UniProtKB-KW"/>
</dbReference>
<dbReference type="GO" id="GO:0019843">
    <property type="term" value="F:rRNA binding"/>
    <property type="evidence" value="ECO:0007669"/>
    <property type="project" value="UniProtKB-UniRule"/>
</dbReference>
<dbReference type="GO" id="GO:0003735">
    <property type="term" value="F:structural constituent of ribosome"/>
    <property type="evidence" value="ECO:0007669"/>
    <property type="project" value="InterPro"/>
</dbReference>
<dbReference type="GO" id="GO:0006412">
    <property type="term" value="P:translation"/>
    <property type="evidence" value="ECO:0007669"/>
    <property type="project" value="UniProtKB-UniRule"/>
</dbReference>
<dbReference type="FunFam" id="3.30.1370.30:FF:000002">
    <property type="entry name" value="30S ribosomal protein S8"/>
    <property type="match status" value="1"/>
</dbReference>
<dbReference type="FunFam" id="3.30.1490.10:FF:000001">
    <property type="entry name" value="30S ribosomal protein S8"/>
    <property type="match status" value="1"/>
</dbReference>
<dbReference type="Gene3D" id="3.30.1370.30">
    <property type="match status" value="1"/>
</dbReference>
<dbReference type="Gene3D" id="3.30.1490.10">
    <property type="match status" value="1"/>
</dbReference>
<dbReference type="HAMAP" id="MF_01302_B">
    <property type="entry name" value="Ribosomal_uS8_B"/>
    <property type="match status" value="1"/>
</dbReference>
<dbReference type="InterPro" id="IPR000630">
    <property type="entry name" value="Ribosomal_uS8"/>
</dbReference>
<dbReference type="InterPro" id="IPR047863">
    <property type="entry name" value="Ribosomal_uS8_CS"/>
</dbReference>
<dbReference type="InterPro" id="IPR035987">
    <property type="entry name" value="Ribosomal_uS8_sf"/>
</dbReference>
<dbReference type="NCBIfam" id="NF001109">
    <property type="entry name" value="PRK00136.1"/>
    <property type="match status" value="1"/>
</dbReference>
<dbReference type="PANTHER" id="PTHR11758">
    <property type="entry name" value="40S RIBOSOMAL PROTEIN S15A"/>
    <property type="match status" value="1"/>
</dbReference>
<dbReference type="Pfam" id="PF00410">
    <property type="entry name" value="Ribosomal_S8"/>
    <property type="match status" value="1"/>
</dbReference>
<dbReference type="SUPFAM" id="SSF56047">
    <property type="entry name" value="Ribosomal protein S8"/>
    <property type="match status" value="1"/>
</dbReference>
<dbReference type="PROSITE" id="PS00053">
    <property type="entry name" value="RIBOSOMAL_S8"/>
    <property type="match status" value="1"/>
</dbReference>
<gene>
    <name evidence="1" type="primary">rpsH</name>
    <name type="ordered locus">SH0816</name>
</gene>
<sequence>MTMTDPIADMLTRVRNANMVRHEKLELPASNIKKQIAEILKSEGFIKNVEYVEDDKQGVIRLFLKYGQNNERVITGLKRISKPGLRVYAKANEVPKVLNGLGIALVSTSEGVITDKEARKRNVGGEIIAYVW</sequence>
<accession>Q4L8A0</accession>
<keyword id="KW-0687">Ribonucleoprotein</keyword>
<keyword id="KW-0689">Ribosomal protein</keyword>
<keyword id="KW-0694">RNA-binding</keyword>
<keyword id="KW-0699">rRNA-binding</keyword>
<proteinExistence type="inferred from homology"/>